<proteinExistence type="inferred from homology"/>
<feature type="chain" id="PRO_0000046966" description="Protein hunchback">
    <location>
        <begin position="1"/>
        <end position="759"/>
    </location>
</feature>
<feature type="zinc finger region" description="C2H2-type 1" evidence="3">
    <location>
        <begin position="241"/>
        <end position="263"/>
    </location>
</feature>
<feature type="zinc finger region" description="C2H2-type 2" evidence="3">
    <location>
        <begin position="270"/>
        <end position="292"/>
    </location>
</feature>
<feature type="zinc finger region" description="C2H2-type 3" evidence="3">
    <location>
        <begin position="298"/>
        <end position="320"/>
    </location>
</feature>
<feature type="zinc finger region" description="C2H2-type 4" evidence="3">
    <location>
        <begin position="326"/>
        <end position="350"/>
    </location>
</feature>
<feature type="zinc finger region" description="C2H2-type 5" evidence="3">
    <location>
        <begin position="706"/>
        <end position="728"/>
    </location>
</feature>
<feature type="zinc finger region" description="C2H2-type 6" evidence="3">
    <location>
        <begin position="734"/>
        <end position="758"/>
    </location>
</feature>
<feature type="region of interest" description="Disordered" evidence="4">
    <location>
        <begin position="30"/>
        <end position="51"/>
    </location>
</feature>
<feature type="region of interest" description="Disordered" evidence="4">
    <location>
        <begin position="171"/>
        <end position="215"/>
    </location>
</feature>
<feature type="region of interest" description="Disordered" evidence="4">
    <location>
        <begin position="366"/>
        <end position="419"/>
    </location>
</feature>
<feature type="region of interest" description="Disordered" evidence="4">
    <location>
        <begin position="513"/>
        <end position="565"/>
    </location>
</feature>
<feature type="region of interest" description="Disordered" evidence="4">
    <location>
        <begin position="606"/>
        <end position="696"/>
    </location>
</feature>
<feature type="compositionally biased region" description="Polar residues" evidence="4">
    <location>
        <begin position="39"/>
        <end position="51"/>
    </location>
</feature>
<feature type="compositionally biased region" description="Basic and acidic residues" evidence="4">
    <location>
        <begin position="199"/>
        <end position="215"/>
    </location>
</feature>
<feature type="compositionally biased region" description="Low complexity" evidence="4">
    <location>
        <begin position="399"/>
        <end position="419"/>
    </location>
</feature>
<feature type="compositionally biased region" description="Low complexity" evidence="4">
    <location>
        <begin position="513"/>
        <end position="522"/>
    </location>
</feature>
<feature type="compositionally biased region" description="Acidic residues" evidence="4">
    <location>
        <begin position="523"/>
        <end position="532"/>
    </location>
</feature>
<feature type="compositionally biased region" description="Low complexity" evidence="4">
    <location>
        <begin position="655"/>
        <end position="696"/>
    </location>
</feature>
<feature type="modified residue" description="Phosphothreonine" evidence="2">
    <location>
        <position position="179"/>
    </location>
</feature>
<feature type="modified residue" description="Phosphoserine" evidence="2">
    <location>
        <position position="189"/>
    </location>
</feature>
<feature type="modified residue" description="Phosphoserine" evidence="2">
    <location>
        <position position="208"/>
    </location>
</feature>
<feature type="modified residue" description="Phosphoserine" evidence="2">
    <location>
        <position position="210"/>
    </location>
</feature>
<feature type="modified residue" description="Phosphoserine" evidence="2">
    <location>
        <position position="211"/>
    </location>
</feature>
<feature type="modified residue" description="Phosphoserine" evidence="2">
    <location>
        <position position="537"/>
    </location>
</feature>
<feature type="modified residue" description="Phosphoserine" evidence="2">
    <location>
        <position position="540"/>
    </location>
</feature>
<feature type="sequence conflict" description="In Ref. 1; CAA06506." evidence="5" ref="1">
    <original>A</original>
    <variation>L</variation>
    <location>
        <position position="495"/>
    </location>
</feature>
<feature type="sequence conflict" description="In Ref. 1; CAA06506." evidence="5" ref="1">
    <original>Q</original>
    <variation>H</variation>
    <location>
        <position position="520"/>
    </location>
</feature>
<feature type="sequence conflict" description="In Ref. 1; CAA06506." evidence="5" ref="1">
    <original>P</original>
    <variation>A</variation>
    <location>
        <position position="653"/>
    </location>
</feature>
<protein>
    <recommendedName>
        <fullName evidence="2">Protein hunchback</fullName>
    </recommendedName>
</protein>
<keyword id="KW-0217">Developmental protein</keyword>
<keyword id="KW-0238">DNA-binding</keyword>
<keyword id="KW-0302">Gap protein</keyword>
<keyword id="KW-0479">Metal-binding</keyword>
<keyword id="KW-0539">Nucleus</keyword>
<keyword id="KW-0597">Phosphoprotein</keyword>
<keyword id="KW-0677">Repeat</keyword>
<keyword id="KW-0862">Zinc</keyword>
<keyword id="KW-0863">Zinc-finger</keyword>
<name>HUNB_DROYA</name>
<reference key="1">
    <citation type="journal article" date="1998" name="Mol. Biol. Evol.">
        <title>Microevolutionary divergence pattern of the segmentation gene hunchback in Drosophila.</title>
        <authorList>
            <person name="Tautz D."/>
            <person name="Nigro L."/>
        </authorList>
    </citation>
    <scope>NUCLEOTIDE SEQUENCE [GENOMIC DNA]</scope>
</reference>
<reference key="2">
    <citation type="journal article" date="2007" name="Nature">
        <title>Evolution of genes and genomes on the Drosophila phylogeny.</title>
        <authorList>
            <consortium name="Drosophila 12 genomes consortium"/>
        </authorList>
    </citation>
    <scope>NUCLEOTIDE SEQUENCE [LARGE SCALE GENOMIC DNA]</scope>
    <source>
        <strain>Tai18E2 / Tucson 14021-0261.01</strain>
    </source>
</reference>
<evidence type="ECO:0000250" key="1"/>
<evidence type="ECO:0000250" key="2">
    <source>
        <dbReference type="UniProtKB" id="P05084"/>
    </source>
</evidence>
<evidence type="ECO:0000255" key="3">
    <source>
        <dbReference type="PROSITE-ProRule" id="PRU00042"/>
    </source>
</evidence>
<evidence type="ECO:0000256" key="4">
    <source>
        <dbReference type="SAM" id="MobiDB-lite"/>
    </source>
</evidence>
<evidence type="ECO:0000305" key="5"/>
<sequence>MQNWETTATTNYEQHNAWYNSMFAANIKQEPGHHLDGNSVASSPRQSPIPSTNHLEQFLKQQQQQQHQQQPMDTLCAMTPSPSQNDQNSLQHYDASLQQQLLQQQQYQQHFQAAQQQHHHHHHLMGGFNPLTPPGLPNPMQHFYGGNLRPSPQPTPTSASTVAPVAVATGSSEKLQALTPPMDVTPPKSPAKSSQSNIEPEKEHDQMSNSSEDMKYMAESEDDDTNIRMPIYNSHGKMKNYKCKTCGVVAITKVDFWAHTRTHMKPDKILQCPKCPFVTEFKHHLEYHIRKHKNQKPFQCDKCSYTCVNKSMLNSHRKSHSSVYQYRCADCDYATKYCHSFKLHLRKYGHKPGMVLDEDGTPNPSLVIDVYGTRRGPKSKNGGPIASGGSGSGSRKPNVAAVAPQQQQSQPAQPATSQLSAALQGFPLVQSNSAPPAASPVLPLPASPAKSVASVEQTPSLPSPANLLPPLASLLQQNRNMAFFPYWNLNLQMLAAQQQAAVLAQLSPRMREQLQQQNQQQSDNEEEEQDDEYERKSVDSAMDLSQGTPVKEDDQHQQQQQPQQPLAMNLKVEEEATPLMSSSNASRRKGRVLKLDTLLQLRSEAMTSPEQLKVPSTPMPTASSPIAGRKPMPEDHCSGTSSADESMETAHVPQANTSASSTASSSGNSSNASSNGNSSSNSSSNGTSSAAAAPASGTPAAAGAIYECKYCDIFFKDAVLYTIHMGYHSCDDVFKCNMCGEKCDGPVGLFVHMARNAHS</sequence>
<accession>O62541</accession>
<accession>B4PT90</accession>
<dbReference type="EMBL" id="AJ005376">
    <property type="protein sequence ID" value="CAA06506.1"/>
    <property type="molecule type" value="Genomic_DNA"/>
</dbReference>
<dbReference type="EMBL" id="CM000160">
    <property type="protein sequence ID" value="EDW96551.1"/>
    <property type="molecule type" value="Genomic_DNA"/>
</dbReference>
<dbReference type="SMR" id="O62541"/>
<dbReference type="EnsemblMetazoa" id="FBtr0271352">
    <property type="protein sequence ID" value="FBpp0269844"/>
    <property type="gene ID" value="FBgn0022824"/>
</dbReference>
<dbReference type="EnsemblMetazoa" id="XM_002096803.4">
    <property type="protein sequence ID" value="XP_002096839.1"/>
    <property type="gene ID" value="LOC6536253"/>
</dbReference>
<dbReference type="EnsemblMetazoa" id="XM_039375674.2">
    <property type="protein sequence ID" value="XP_039231608.1"/>
    <property type="gene ID" value="LOC6536253"/>
</dbReference>
<dbReference type="GeneID" id="6536253"/>
<dbReference type="KEGG" id="dya:Dyak_GE24834"/>
<dbReference type="CTD" id="15120"/>
<dbReference type="eggNOG" id="KOG1721">
    <property type="taxonomic scope" value="Eukaryota"/>
</dbReference>
<dbReference type="HOGENOM" id="CLU_021336_0_0_1"/>
<dbReference type="OMA" id="LPEEHCS"/>
<dbReference type="OrthoDB" id="10015593at2759"/>
<dbReference type="Proteomes" id="UP000002282">
    <property type="component" value="Chromosome 3R"/>
</dbReference>
<dbReference type="GO" id="GO:0005634">
    <property type="term" value="C:nucleus"/>
    <property type="evidence" value="ECO:0007669"/>
    <property type="project" value="UniProtKB-SubCell"/>
</dbReference>
<dbReference type="GO" id="GO:0000981">
    <property type="term" value="F:DNA-binding transcription factor activity, RNA polymerase II-specific"/>
    <property type="evidence" value="ECO:0007669"/>
    <property type="project" value="EnsemblMetazoa"/>
</dbReference>
<dbReference type="GO" id="GO:0000978">
    <property type="term" value="F:RNA polymerase II cis-regulatory region sequence-specific DNA binding"/>
    <property type="evidence" value="ECO:0007669"/>
    <property type="project" value="EnsemblMetazoa"/>
</dbReference>
<dbReference type="GO" id="GO:0008270">
    <property type="term" value="F:zinc ion binding"/>
    <property type="evidence" value="ECO:0007669"/>
    <property type="project" value="UniProtKB-KW"/>
</dbReference>
<dbReference type="GO" id="GO:0009948">
    <property type="term" value="P:anterior/posterior axis specification"/>
    <property type="evidence" value="ECO:0007669"/>
    <property type="project" value="EnsemblMetazoa"/>
</dbReference>
<dbReference type="GO" id="GO:0048699">
    <property type="term" value="P:generation of neurons"/>
    <property type="evidence" value="ECO:0007669"/>
    <property type="project" value="EnsemblMetazoa"/>
</dbReference>
<dbReference type="GO" id="GO:0000122">
    <property type="term" value="P:negative regulation of transcription by RNA polymerase II"/>
    <property type="evidence" value="ECO:0007669"/>
    <property type="project" value="EnsemblMetazoa"/>
</dbReference>
<dbReference type="GO" id="GO:0045944">
    <property type="term" value="P:positive regulation of transcription by RNA polymerase II"/>
    <property type="evidence" value="ECO:0007669"/>
    <property type="project" value="EnsemblMetazoa"/>
</dbReference>
<dbReference type="GO" id="GO:2000177">
    <property type="term" value="P:regulation of neural precursor cell proliferation"/>
    <property type="evidence" value="ECO:0007669"/>
    <property type="project" value="EnsemblMetazoa"/>
</dbReference>
<dbReference type="GO" id="GO:0050767">
    <property type="term" value="P:regulation of neurogenesis"/>
    <property type="evidence" value="ECO:0007669"/>
    <property type="project" value="EnsemblMetazoa"/>
</dbReference>
<dbReference type="GO" id="GO:0035282">
    <property type="term" value="P:segmentation"/>
    <property type="evidence" value="ECO:0007669"/>
    <property type="project" value="UniProtKB-KW"/>
</dbReference>
<dbReference type="FunFam" id="3.30.160.60:FF:001301">
    <property type="entry name" value="Blast:Protein hunchback"/>
    <property type="match status" value="1"/>
</dbReference>
<dbReference type="FunFam" id="3.30.160.60:FF:001482">
    <property type="entry name" value="Hunchback"/>
    <property type="match status" value="1"/>
</dbReference>
<dbReference type="Gene3D" id="3.30.160.60">
    <property type="entry name" value="Classic Zinc Finger"/>
    <property type="match status" value="3"/>
</dbReference>
<dbReference type="InterPro" id="IPR036236">
    <property type="entry name" value="Znf_C2H2_sf"/>
</dbReference>
<dbReference type="InterPro" id="IPR013087">
    <property type="entry name" value="Znf_C2H2_type"/>
</dbReference>
<dbReference type="PANTHER" id="PTHR24392:SF49">
    <property type="entry name" value="PROTEIN HUNCHBACK"/>
    <property type="match status" value="1"/>
</dbReference>
<dbReference type="PANTHER" id="PTHR24392">
    <property type="entry name" value="ZINC FINGER PROTEIN"/>
    <property type="match status" value="1"/>
</dbReference>
<dbReference type="Pfam" id="PF00096">
    <property type="entry name" value="zf-C2H2"/>
    <property type="match status" value="2"/>
</dbReference>
<dbReference type="SMART" id="SM00355">
    <property type="entry name" value="ZnF_C2H2"/>
    <property type="match status" value="6"/>
</dbReference>
<dbReference type="SUPFAM" id="SSF57667">
    <property type="entry name" value="beta-beta-alpha zinc fingers"/>
    <property type="match status" value="3"/>
</dbReference>
<dbReference type="PROSITE" id="PS00028">
    <property type="entry name" value="ZINC_FINGER_C2H2_1"/>
    <property type="match status" value="3"/>
</dbReference>
<dbReference type="PROSITE" id="PS50157">
    <property type="entry name" value="ZINC_FINGER_C2H2_2"/>
    <property type="match status" value="2"/>
</dbReference>
<gene>
    <name evidence="2" type="primary">hb</name>
</gene>
<comment type="function">
    <text evidence="1">Gap class segmentation protein that controls development of head structures.</text>
</comment>
<comment type="subcellular location">
    <subcellularLocation>
        <location evidence="1">Nucleus</location>
    </subcellularLocation>
</comment>
<comment type="similarity">
    <text evidence="5">Belongs to the hunchback C2H2-type zinc-finger protein family.</text>
</comment>
<organism>
    <name type="scientific">Drosophila yakuba</name>
    <name type="common">Fruit fly</name>
    <dbReference type="NCBI Taxonomy" id="7245"/>
    <lineage>
        <taxon>Eukaryota</taxon>
        <taxon>Metazoa</taxon>
        <taxon>Ecdysozoa</taxon>
        <taxon>Arthropoda</taxon>
        <taxon>Hexapoda</taxon>
        <taxon>Insecta</taxon>
        <taxon>Pterygota</taxon>
        <taxon>Neoptera</taxon>
        <taxon>Endopterygota</taxon>
        <taxon>Diptera</taxon>
        <taxon>Brachycera</taxon>
        <taxon>Muscomorpha</taxon>
        <taxon>Ephydroidea</taxon>
        <taxon>Drosophilidae</taxon>
        <taxon>Drosophila</taxon>
        <taxon>Sophophora</taxon>
    </lineage>
</organism>